<feature type="chain" id="PRO_0000262956" description="Diencephalon/mesencephalon homeobox protein 1-A">
    <location>
        <begin position="1"/>
        <end position="388"/>
    </location>
</feature>
<feature type="DNA-binding region" description="Homeobox" evidence="3">
    <location>
        <begin position="71"/>
        <end position="130"/>
    </location>
</feature>
<feature type="region of interest" description="Disordered" evidence="5">
    <location>
        <begin position="129"/>
        <end position="272"/>
    </location>
</feature>
<feature type="coiled-coil region" evidence="2">
    <location>
        <begin position="206"/>
        <end position="232"/>
    </location>
</feature>
<feature type="short sequence motif" description="OAR" evidence="4">
    <location>
        <begin position="365"/>
        <end position="378"/>
    </location>
</feature>
<feature type="compositionally biased region" description="Basic and acidic residues" evidence="5">
    <location>
        <begin position="133"/>
        <end position="145"/>
    </location>
</feature>
<feature type="compositionally biased region" description="Polar residues" evidence="5">
    <location>
        <begin position="160"/>
        <end position="169"/>
    </location>
</feature>
<feature type="compositionally biased region" description="Polar residues" evidence="5">
    <location>
        <begin position="195"/>
        <end position="211"/>
    </location>
</feature>
<feature type="compositionally biased region" description="Basic and acidic residues" evidence="5">
    <location>
        <begin position="213"/>
        <end position="233"/>
    </location>
</feature>
<feature type="compositionally biased region" description="Low complexity" evidence="5">
    <location>
        <begin position="251"/>
        <end position="272"/>
    </location>
</feature>
<feature type="splice variant" id="VSP_052250" description="In isoform 2." evidence="9 10">
    <location>
        <begin position="52"/>
        <end position="56"/>
    </location>
</feature>
<proteinExistence type="evidence at transcript level"/>
<gene>
    <name evidence="15" type="primary">dmbx1a</name>
    <name evidence="15" type="synonym">dmbx1</name>
    <name evidence="9" type="synonym">mbx</name>
    <name evidence="10" type="synonym">mbx1</name>
    <name evidence="12" type="synonym">pox1</name>
</gene>
<reference evidence="11 13" key="1">
    <citation type="journal article" date="2002" name="Dev. Biol.">
        <title>The homeobox gene mbx is involved in eye and tectum development.</title>
        <authorList>
            <person name="Kawahara A."/>
            <person name="Chien C.-B."/>
            <person name="Dawid I.B."/>
        </authorList>
    </citation>
    <scope>NUCLEOTIDE SEQUENCE [MRNA] (ISOFORMS 1 AND 2)</scope>
    <scope>FUNCTION</scope>
    <scope>TISSUE SPECIFICITY</scope>
    <scope>DEVELOPMENTAL STAGE</scope>
</reference>
<reference evidence="11" key="2">
    <citation type="journal article" date="2006" name="Dev. Genes Evol.">
        <title>Genomic sequence and spatiotemporal expression comparison of zebrafish mbx1 and its paralog, mbx2.</title>
        <authorList>
            <person name="Chang L."/>
            <person name="Khoo B."/>
            <person name="Wong L."/>
            <person name="Tropepe V."/>
        </authorList>
    </citation>
    <scope>NUCLEOTIDE SEQUENCE [MRNA] (ISOFORM 2)</scope>
    <scope>TISSUE SPECIFICITY</scope>
    <scope>DEVELOPMENTAL STAGE</scope>
</reference>
<reference evidence="11 12" key="3">
    <citation type="submission" date="2001-12" db="EMBL/GenBank/DDBJ databases">
        <title>A novel zebrafish paired-like homeobox gene.</title>
        <authorList>
            <person name="Bayarsaihan D."/>
        </authorList>
    </citation>
    <scope>NUCLEOTIDE SEQUENCE [MRNA] (ISOFORM 1)</scope>
</reference>
<keyword id="KW-0025">Alternative splicing</keyword>
<keyword id="KW-0175">Coiled coil</keyword>
<keyword id="KW-0217">Developmental protein</keyword>
<keyword id="KW-0238">DNA-binding</keyword>
<keyword id="KW-0371">Homeobox</keyword>
<keyword id="KW-0539">Nucleus</keyword>
<keyword id="KW-1185">Reference proteome</keyword>
<keyword id="KW-0678">Repressor</keyword>
<keyword id="KW-0804">Transcription</keyword>
<keyword id="KW-0805">Transcription regulation</keyword>
<sequence length="388" mass="42716">MQHYGVNGYSLHAMNSLSAMYNLHQQAAQQAQHAPDYRPSVHALTLAERLAGCTFQDIILEARYGSQHRKQRRSRTAFTAQQLEALEKTFQKTHYPDVVMRERLAMCTNLPEARVQVWFKNRRAKFRKKQRSLQKEQLQKQKDVSTDGALAASDKDEAPSTLNLENQPPSSTSSSSSMEAEAAPHALGSELSVELNVTSAEQSGSESATEDNATDKEEEIKQHREDLKVEKEPAPGNLSPLCKRLSPKPDSPLGSPAISSSSSGVTGGISQSHSYSSSPLSLFRLQEQFRQHMAATNNLVHYPSFDMATPSSIPYLGMNVNMPAPLGSLPCQSYYQSLSHHAQQVWNSPLLQASGGLPSHNSKTTSIENLRLRAKQHAASLGLDTLPN</sequence>
<comment type="function">
    <text evidence="6">Required for eye and tectum development. May act as a transcriptional repressor.</text>
</comment>
<comment type="subcellular location">
    <subcellularLocation>
        <location evidence="1 3 4">Nucleus</location>
    </subcellularLocation>
</comment>
<comment type="alternative products">
    <event type="alternative splicing"/>
    <isoform>
        <id>Q8JI10-1</id>
        <name evidence="6 8">1</name>
        <name evidence="13">Mbx-L</name>
        <sequence type="displayed"/>
    </isoform>
    <isoform>
        <id>Q8JI10-2</id>
        <name evidence="6">2</name>
        <name evidence="14">Mbx-S</name>
        <sequence type="described" ref="VSP_052250"/>
    </isoform>
</comment>
<comment type="tissue specificity">
    <text evidence="6 7">In embryos, expressed in mesencephalon with strongest expression dorsally, diencephalon, and rhombencephalon. During somitogenesis, anterior expression which partly overlaps the future eye field, gradually decreases while midbrain expression intensifies and becomes restricted to the presumptive tectum. In adult, strong expression in forebrain, midbrain and cerebellum.</text>
</comment>
<comment type="developmental stage">
    <text evidence="6 7">Not expressed maternally. First detected at 9 hours post-fertilization (hpf), with high levels until 24 hpf. Also expressed in adult.</text>
</comment>
<comment type="similarity">
    <text evidence="11">Belongs to the paired homeobox family.</text>
</comment>
<evidence type="ECO:0000250" key="1">
    <source>
        <dbReference type="UniProtKB" id="O35137"/>
    </source>
</evidence>
<evidence type="ECO:0000255" key="2"/>
<evidence type="ECO:0000255" key="3">
    <source>
        <dbReference type="PROSITE-ProRule" id="PRU00108"/>
    </source>
</evidence>
<evidence type="ECO:0000255" key="4">
    <source>
        <dbReference type="PROSITE-ProRule" id="PRU00138"/>
    </source>
</evidence>
<evidence type="ECO:0000256" key="5">
    <source>
        <dbReference type="SAM" id="MobiDB-lite"/>
    </source>
</evidence>
<evidence type="ECO:0000269" key="6">
    <source>
    </source>
</evidence>
<evidence type="ECO:0000269" key="7">
    <source>
    </source>
</evidence>
<evidence type="ECO:0000269" key="8">
    <source ref="3"/>
</evidence>
<evidence type="ECO:0000303" key="9">
    <source>
    </source>
</evidence>
<evidence type="ECO:0000303" key="10">
    <source>
    </source>
</evidence>
<evidence type="ECO:0000305" key="11"/>
<evidence type="ECO:0000312" key="12">
    <source>
        <dbReference type="EMBL" id="AAL58532.1"/>
    </source>
</evidence>
<evidence type="ECO:0000312" key="13">
    <source>
        <dbReference type="EMBL" id="AAM90587.1"/>
    </source>
</evidence>
<evidence type="ECO:0000312" key="14">
    <source>
        <dbReference type="EMBL" id="AAM90588.1"/>
    </source>
</evidence>
<evidence type="ECO:0000312" key="15">
    <source>
        <dbReference type="ZFIN" id="ZDB-GENE-020117-1"/>
    </source>
</evidence>
<organism>
    <name type="scientific">Danio rerio</name>
    <name type="common">Zebrafish</name>
    <name type="synonym">Brachydanio rerio</name>
    <dbReference type="NCBI Taxonomy" id="7955"/>
    <lineage>
        <taxon>Eukaryota</taxon>
        <taxon>Metazoa</taxon>
        <taxon>Chordata</taxon>
        <taxon>Craniata</taxon>
        <taxon>Vertebrata</taxon>
        <taxon>Euteleostomi</taxon>
        <taxon>Actinopterygii</taxon>
        <taxon>Neopterygii</taxon>
        <taxon>Teleostei</taxon>
        <taxon>Ostariophysi</taxon>
        <taxon>Cypriniformes</taxon>
        <taxon>Danionidae</taxon>
        <taxon>Danioninae</taxon>
        <taxon>Danio</taxon>
    </lineage>
</organism>
<accession>Q8JI10</accession>
<accession>Q8JI09</accession>
<name>DMX1A_DANRE</name>
<dbReference type="EMBL" id="AF398525">
    <property type="protein sequence ID" value="AAM90587.1"/>
    <property type="molecule type" value="mRNA"/>
</dbReference>
<dbReference type="EMBL" id="AF398526">
    <property type="protein sequence ID" value="AAM90588.1"/>
    <property type="molecule type" value="mRNA"/>
</dbReference>
<dbReference type="EMBL" id="AY071922">
    <property type="protein sequence ID" value="AAL58532.1"/>
    <property type="molecule type" value="mRNA"/>
</dbReference>
<dbReference type="RefSeq" id="NP_694509.1">
    <molecule id="Q8JI10-1"/>
    <property type="nucleotide sequence ID" value="NM_152977.1"/>
</dbReference>
<dbReference type="RefSeq" id="NP_835457.2">
    <molecule id="Q8JI10-2"/>
    <property type="nucleotide sequence ID" value="NM_178163.2"/>
</dbReference>
<dbReference type="RefSeq" id="XP_017213101.1">
    <property type="nucleotide sequence ID" value="XM_017357612.1"/>
</dbReference>
<dbReference type="SMR" id="Q8JI10"/>
<dbReference type="FunCoup" id="Q8JI10">
    <property type="interactions" value="26"/>
</dbReference>
<dbReference type="STRING" id="7955.ENSDARP00000106835"/>
<dbReference type="PaxDb" id="7955-ENSDARP00000027577"/>
<dbReference type="Ensembl" id="ENSDART00000017173">
    <molecule id="Q8JI10-1"/>
    <property type="protein sequence ID" value="ENSDARP00000027577"/>
    <property type="gene ID" value="ENSDARG00000009922"/>
</dbReference>
<dbReference type="GeneID" id="142987"/>
<dbReference type="KEGG" id="dre:142987"/>
<dbReference type="AGR" id="ZFIN:ZDB-GENE-020117-1"/>
<dbReference type="CTD" id="142987"/>
<dbReference type="ZFIN" id="ZDB-GENE-020117-1">
    <property type="gene designation" value="dmbx1a"/>
</dbReference>
<dbReference type="eggNOG" id="KOG0490">
    <property type="taxonomic scope" value="Eukaryota"/>
</dbReference>
<dbReference type="HOGENOM" id="CLU_060969_0_0_1"/>
<dbReference type="InParanoid" id="Q8JI10"/>
<dbReference type="OMA" id="CLQEQFR"/>
<dbReference type="OrthoDB" id="6159439at2759"/>
<dbReference type="PhylomeDB" id="Q8JI10"/>
<dbReference type="TreeFam" id="TF351609"/>
<dbReference type="PRO" id="PR:Q8JI10"/>
<dbReference type="Proteomes" id="UP000000437">
    <property type="component" value="Chromosome 2"/>
</dbReference>
<dbReference type="Bgee" id="ENSDARG00000009922">
    <property type="expression patterns" value="Expressed in retina and 31 other cell types or tissues"/>
</dbReference>
<dbReference type="ExpressionAtlas" id="Q8JI10">
    <property type="expression patterns" value="baseline"/>
</dbReference>
<dbReference type="GO" id="GO:0005634">
    <property type="term" value="C:nucleus"/>
    <property type="evidence" value="ECO:0007669"/>
    <property type="project" value="UniProtKB-SubCell"/>
</dbReference>
<dbReference type="GO" id="GO:0000981">
    <property type="term" value="F:DNA-binding transcription factor activity, RNA polymerase II-specific"/>
    <property type="evidence" value="ECO:0000318"/>
    <property type="project" value="GO_Central"/>
</dbReference>
<dbReference type="GO" id="GO:0000977">
    <property type="term" value="F:RNA polymerase II transcription regulatory region sequence-specific DNA binding"/>
    <property type="evidence" value="ECO:0000318"/>
    <property type="project" value="GO_Central"/>
</dbReference>
<dbReference type="GO" id="GO:0007420">
    <property type="term" value="P:brain development"/>
    <property type="evidence" value="ECO:0000270"/>
    <property type="project" value="UniProtKB"/>
</dbReference>
<dbReference type="GO" id="GO:0043010">
    <property type="term" value="P:camera-type eye development"/>
    <property type="evidence" value="ECO:0000315"/>
    <property type="project" value="ZFIN"/>
</dbReference>
<dbReference type="GO" id="GO:0001654">
    <property type="term" value="P:eye development"/>
    <property type="evidence" value="ECO:0000270"/>
    <property type="project" value="UniProtKB"/>
</dbReference>
<dbReference type="GO" id="GO:0030901">
    <property type="term" value="P:midbrain development"/>
    <property type="evidence" value="ECO:0000315"/>
    <property type="project" value="ZFIN"/>
</dbReference>
<dbReference type="GO" id="GO:0045892">
    <property type="term" value="P:negative regulation of DNA-templated transcription"/>
    <property type="evidence" value="ECO:0000315"/>
    <property type="project" value="UniProtKB"/>
</dbReference>
<dbReference type="GO" id="GO:0051726">
    <property type="term" value="P:regulation of cell cycle"/>
    <property type="evidence" value="ECO:0000315"/>
    <property type="project" value="ZFIN"/>
</dbReference>
<dbReference type="GO" id="GO:0007346">
    <property type="term" value="P:regulation of mitotic cell cycle"/>
    <property type="evidence" value="ECO:0000316"/>
    <property type="project" value="ZFIN"/>
</dbReference>
<dbReference type="GO" id="GO:0061074">
    <property type="term" value="P:regulation of neural retina development"/>
    <property type="evidence" value="ECO:0000316"/>
    <property type="project" value="ZFIN"/>
</dbReference>
<dbReference type="GO" id="GO:0050767">
    <property type="term" value="P:regulation of neurogenesis"/>
    <property type="evidence" value="ECO:0000315"/>
    <property type="project" value="ZFIN"/>
</dbReference>
<dbReference type="GO" id="GO:0006357">
    <property type="term" value="P:regulation of transcription by RNA polymerase II"/>
    <property type="evidence" value="ECO:0000318"/>
    <property type="project" value="GO_Central"/>
</dbReference>
<dbReference type="GO" id="GO:0060041">
    <property type="term" value="P:retina development in camera-type eye"/>
    <property type="evidence" value="ECO:0000315"/>
    <property type="project" value="ZFIN"/>
</dbReference>
<dbReference type="CDD" id="cd00086">
    <property type="entry name" value="homeodomain"/>
    <property type="match status" value="1"/>
</dbReference>
<dbReference type="FunFam" id="1.10.10.60:FF:000125">
    <property type="entry name" value="diencephalon/mesencephalon homeobox protein 1"/>
    <property type="match status" value="1"/>
</dbReference>
<dbReference type="Gene3D" id="1.10.10.60">
    <property type="entry name" value="Homeodomain-like"/>
    <property type="match status" value="1"/>
</dbReference>
<dbReference type="InterPro" id="IPR052488">
    <property type="entry name" value="DMBX_homeobox"/>
</dbReference>
<dbReference type="InterPro" id="IPR001356">
    <property type="entry name" value="HD"/>
</dbReference>
<dbReference type="InterPro" id="IPR017970">
    <property type="entry name" value="Homeobox_CS"/>
</dbReference>
<dbReference type="InterPro" id="IPR009057">
    <property type="entry name" value="Homeodomain-like_sf"/>
</dbReference>
<dbReference type="InterPro" id="IPR003654">
    <property type="entry name" value="OAR_dom"/>
</dbReference>
<dbReference type="PANTHER" id="PTHR46639">
    <property type="entry name" value="DIENCEPHALON/MESENCEPHALON HOMEOBOX PROTEIN 1"/>
    <property type="match status" value="1"/>
</dbReference>
<dbReference type="PANTHER" id="PTHR46639:SF3">
    <property type="entry name" value="DIENCEPHALON_MESENCEPHALON HOMEOBOX PROTEIN 1-A-RELATED"/>
    <property type="match status" value="1"/>
</dbReference>
<dbReference type="Pfam" id="PF00046">
    <property type="entry name" value="Homeodomain"/>
    <property type="match status" value="1"/>
</dbReference>
<dbReference type="Pfam" id="PF03826">
    <property type="entry name" value="OAR"/>
    <property type="match status" value="1"/>
</dbReference>
<dbReference type="SMART" id="SM00389">
    <property type="entry name" value="HOX"/>
    <property type="match status" value="1"/>
</dbReference>
<dbReference type="SUPFAM" id="SSF46689">
    <property type="entry name" value="Homeodomain-like"/>
    <property type="match status" value="1"/>
</dbReference>
<dbReference type="PROSITE" id="PS00027">
    <property type="entry name" value="HOMEOBOX_1"/>
    <property type="match status" value="1"/>
</dbReference>
<dbReference type="PROSITE" id="PS50071">
    <property type="entry name" value="HOMEOBOX_2"/>
    <property type="match status" value="1"/>
</dbReference>
<dbReference type="PROSITE" id="PS50803">
    <property type="entry name" value="OAR"/>
    <property type="match status" value="1"/>
</dbReference>
<protein>
    <recommendedName>
        <fullName>Diencephalon/mesencephalon homeobox protein 1-A</fullName>
    </recommendedName>
    <alternativeName>
        <fullName>Paired homeobox protein 1</fullName>
    </alternativeName>
</protein>